<accession>A1WYI8</accession>
<feature type="chain" id="PRO_0000289493" description="GTP cyclohydrolase FolE2">
    <location>
        <begin position="1"/>
        <end position="259"/>
    </location>
</feature>
<feature type="site" description="May be catalytically important" evidence="1">
    <location>
        <position position="145"/>
    </location>
</feature>
<proteinExistence type="inferred from homology"/>
<keyword id="KW-0378">Hydrolase</keyword>
<keyword id="KW-1185">Reference proteome</keyword>
<dbReference type="EC" id="3.5.4.16" evidence="1"/>
<dbReference type="EMBL" id="CP000544">
    <property type="protein sequence ID" value="ABM62750.1"/>
    <property type="molecule type" value="Genomic_DNA"/>
</dbReference>
<dbReference type="RefSeq" id="WP_011814772.1">
    <property type="nucleotide sequence ID" value="NC_008789.1"/>
</dbReference>
<dbReference type="SMR" id="A1WYI8"/>
<dbReference type="STRING" id="349124.Hhal_1986"/>
<dbReference type="KEGG" id="hha:Hhal_1986"/>
<dbReference type="eggNOG" id="COG1469">
    <property type="taxonomic scope" value="Bacteria"/>
</dbReference>
<dbReference type="HOGENOM" id="CLU_062816_1_1_6"/>
<dbReference type="OrthoDB" id="9774824at2"/>
<dbReference type="UniPathway" id="UPA00848">
    <property type="reaction ID" value="UER00151"/>
</dbReference>
<dbReference type="Proteomes" id="UP000000647">
    <property type="component" value="Chromosome"/>
</dbReference>
<dbReference type="GO" id="GO:0003934">
    <property type="term" value="F:GTP cyclohydrolase I activity"/>
    <property type="evidence" value="ECO:0007669"/>
    <property type="project" value="UniProtKB-UniRule"/>
</dbReference>
<dbReference type="GO" id="GO:0046654">
    <property type="term" value="P:tetrahydrofolate biosynthetic process"/>
    <property type="evidence" value="ECO:0007669"/>
    <property type="project" value="UniProtKB-UniRule"/>
</dbReference>
<dbReference type="Gene3D" id="3.10.270.10">
    <property type="entry name" value="Urate Oxidase"/>
    <property type="match status" value="1"/>
</dbReference>
<dbReference type="HAMAP" id="MF_01527_B">
    <property type="entry name" value="GTP_cyclohydrol_B"/>
    <property type="match status" value="1"/>
</dbReference>
<dbReference type="InterPro" id="IPR022838">
    <property type="entry name" value="GTP_cyclohydrolase_FolE2"/>
</dbReference>
<dbReference type="InterPro" id="IPR003801">
    <property type="entry name" value="GTP_cyclohydrolase_FolE2/MptA"/>
</dbReference>
<dbReference type="NCBIfam" id="NF010200">
    <property type="entry name" value="PRK13674.1-1"/>
    <property type="match status" value="1"/>
</dbReference>
<dbReference type="PANTHER" id="PTHR36445">
    <property type="entry name" value="GTP CYCLOHYDROLASE MPTA"/>
    <property type="match status" value="1"/>
</dbReference>
<dbReference type="PANTHER" id="PTHR36445:SF1">
    <property type="entry name" value="GTP CYCLOHYDROLASE MPTA"/>
    <property type="match status" value="1"/>
</dbReference>
<dbReference type="Pfam" id="PF02649">
    <property type="entry name" value="GCHY-1"/>
    <property type="match status" value="1"/>
</dbReference>
<reference key="1">
    <citation type="submission" date="2006-12" db="EMBL/GenBank/DDBJ databases">
        <title>Complete sequence of Halorhodospira halophila SL1.</title>
        <authorList>
            <consortium name="US DOE Joint Genome Institute"/>
            <person name="Copeland A."/>
            <person name="Lucas S."/>
            <person name="Lapidus A."/>
            <person name="Barry K."/>
            <person name="Detter J.C."/>
            <person name="Glavina del Rio T."/>
            <person name="Hammon N."/>
            <person name="Israni S."/>
            <person name="Dalin E."/>
            <person name="Tice H."/>
            <person name="Pitluck S."/>
            <person name="Saunders E."/>
            <person name="Brettin T."/>
            <person name="Bruce D."/>
            <person name="Han C."/>
            <person name="Tapia R."/>
            <person name="Schmutz J."/>
            <person name="Larimer F."/>
            <person name="Land M."/>
            <person name="Hauser L."/>
            <person name="Kyrpides N."/>
            <person name="Mikhailova N."/>
            <person name="Hoff W."/>
            <person name="Richardson P."/>
        </authorList>
    </citation>
    <scope>NUCLEOTIDE SEQUENCE [LARGE SCALE GENOMIC DNA]</scope>
    <source>
        <strain>DSM 244 / SL1</strain>
    </source>
</reference>
<organism>
    <name type="scientific">Halorhodospira halophila (strain DSM 244 / SL1)</name>
    <name type="common">Ectothiorhodospira halophila (strain DSM 244 / SL1)</name>
    <dbReference type="NCBI Taxonomy" id="349124"/>
    <lineage>
        <taxon>Bacteria</taxon>
        <taxon>Pseudomonadati</taxon>
        <taxon>Pseudomonadota</taxon>
        <taxon>Gammaproteobacteria</taxon>
        <taxon>Chromatiales</taxon>
        <taxon>Ectothiorhodospiraceae</taxon>
        <taxon>Halorhodospira</taxon>
    </lineage>
</organism>
<gene>
    <name evidence="1" type="primary">folE2</name>
    <name type="ordered locus">Hhal_1986</name>
</gene>
<name>GCH4_HALHL</name>
<protein>
    <recommendedName>
        <fullName evidence="1">GTP cyclohydrolase FolE2</fullName>
        <ecNumber evidence="1">3.5.4.16</ecNumber>
    </recommendedName>
</protein>
<comment type="function">
    <text evidence="1">Converts GTP to 7,8-dihydroneopterin triphosphate.</text>
</comment>
<comment type="catalytic activity">
    <reaction evidence="1">
        <text>GTP + H2O = 7,8-dihydroneopterin 3'-triphosphate + formate + H(+)</text>
        <dbReference type="Rhea" id="RHEA:17473"/>
        <dbReference type="ChEBI" id="CHEBI:15377"/>
        <dbReference type="ChEBI" id="CHEBI:15378"/>
        <dbReference type="ChEBI" id="CHEBI:15740"/>
        <dbReference type="ChEBI" id="CHEBI:37565"/>
        <dbReference type="ChEBI" id="CHEBI:58462"/>
        <dbReference type="EC" id="3.5.4.16"/>
    </reaction>
</comment>
<comment type="pathway">
    <text evidence="1">Cofactor biosynthesis; 7,8-dihydroneopterin triphosphate biosynthesis; 7,8-dihydroneopterin triphosphate from GTP: step 1/1.</text>
</comment>
<comment type="similarity">
    <text evidence="1">Belongs to the GTP cyclohydrolase IV family.</text>
</comment>
<sequence>MEDVQGRADTRQIEINKVGIKDIRHPVRVRDRTGRDQHTVATFSMYVNLPQHFKGTHMSRFVSILEGHDREVTVESFHEMLAEMTDRLEAHSGHIEMAFPYFVNKQAPVTGVESLMDYEVTFIGEIHGGRHETWVRVAVPITTLCPCSKEIAERGAHNQRSLVVVTALMDGFVWLEELIDLVEREGSCELYGLLKRPDEKHVTERAYDNPKFVEDVVRDIAGRLNDDGRIAAYSVTSENYESIHNHSAFALIEQDKRGR</sequence>
<evidence type="ECO:0000255" key="1">
    <source>
        <dbReference type="HAMAP-Rule" id="MF_01527"/>
    </source>
</evidence>